<organism>
    <name type="scientific">Deinococcus radiodurans (strain ATCC 13939 / DSM 20539 / JCM 16871 / CCUG 27074 / LMG 4051 / NBRC 15346 / NCIMB 9279 / VKM B-1422 / R1)</name>
    <dbReference type="NCBI Taxonomy" id="243230"/>
    <lineage>
        <taxon>Bacteria</taxon>
        <taxon>Thermotogati</taxon>
        <taxon>Deinococcota</taxon>
        <taxon>Deinococci</taxon>
        <taxon>Deinococcales</taxon>
        <taxon>Deinococcaceae</taxon>
        <taxon>Deinococcus</taxon>
    </lineage>
</organism>
<accession>Q9RS64</accession>
<comment type="function">
    <text evidence="1 3">Protects DNA from oxidative damage by sequestering intracellular Fe(2+) ion and storing it in the form of Fe(3+) oxyhydroxide mineral. One hydrogen peroxide oxidizes two Fe(2+) ions, which prevents hydroxyl radical production by the Fenton reaction (By similarity). Both oligomeric forms of dps exhibit ferroxidase activity and DNA binding. Dodecameric dps is capable of Fe(2+) oxidation/mineralization. Only dimeric dps affords efficient DNA protection against hydroxyl radical-mediated cleavage.</text>
</comment>
<comment type="catalytic activity">
    <reaction>
        <text>2 Fe(2+) + H2O2 + 2 H(+) = 2 Fe(3+) + 2 H2O</text>
        <dbReference type="Rhea" id="RHEA:48712"/>
        <dbReference type="ChEBI" id="CHEBI:15377"/>
        <dbReference type="ChEBI" id="CHEBI:15378"/>
        <dbReference type="ChEBI" id="CHEBI:16240"/>
        <dbReference type="ChEBI" id="CHEBI:29033"/>
        <dbReference type="ChEBI" id="CHEBI:29034"/>
    </reaction>
</comment>
<comment type="subunit">
    <text evidence="1 3">The 12 subunits form a hollow sphere into which the mineral iron core of up to 500 Fe(3+) can be deposited (By similarity). The homododecameric forms at higher concentration of salt, the homodimeric form under reducing, low-salt conditions. The assembly of the dodecamer is irreversible.</text>
</comment>
<comment type="subcellular location">
    <subcellularLocation>
        <location evidence="1">Cytoplasm</location>
        <location evidence="1">Nucleoid</location>
    </subcellularLocation>
</comment>
<comment type="domain">
    <text evidence="1">12 di-nuclear ferroxidase centers are located at the interfaces between subunits related by 2-fold symmetry axes.</text>
</comment>
<comment type="miscellaneous">
    <text>Dodecameric dps forms large aggregates upon binding to DNA.</text>
</comment>
<comment type="miscellaneous">
    <text>Addition of Ca(2+) to dodecameric dps can result in the reduction of bound Fe(3+).</text>
</comment>
<comment type="similarity">
    <text evidence="4">Belongs to the Dps family.</text>
</comment>
<keyword id="KW-0002">3D-structure</keyword>
<keyword id="KW-0963">Cytoplasm</keyword>
<keyword id="KW-0238">DNA-binding</keyword>
<keyword id="KW-0408">Iron</keyword>
<keyword id="KW-0409">Iron storage</keyword>
<keyword id="KW-0479">Metal-binding</keyword>
<keyword id="KW-0560">Oxidoreductase</keyword>
<keyword id="KW-1185">Reference proteome</keyword>
<gene>
    <name type="primary">dps1</name>
    <name type="synonym">dps-1</name>
    <name type="ordered locus">DR_2263</name>
</gene>
<dbReference type="EC" id="1.16.-.-"/>
<dbReference type="EMBL" id="AE000513">
    <property type="protein sequence ID" value="AAF11811.1"/>
    <property type="molecule type" value="Genomic_DNA"/>
</dbReference>
<dbReference type="PIR" id="B75294">
    <property type="entry name" value="B75294"/>
</dbReference>
<dbReference type="RefSeq" id="NP_295984.1">
    <property type="nucleotide sequence ID" value="NC_001263.1"/>
</dbReference>
<dbReference type="RefSeq" id="WP_010888891.1">
    <property type="nucleotide sequence ID" value="NC_001263.1"/>
</dbReference>
<dbReference type="PDB" id="2C2F">
    <property type="method" value="X-ray"/>
    <property type="resolution" value="1.61 A"/>
    <property type="chains" value="A=1-207"/>
</dbReference>
<dbReference type="PDB" id="2C2U">
    <property type="method" value="X-ray"/>
    <property type="resolution" value="1.10 A"/>
    <property type="chains" value="A=1-207"/>
</dbReference>
<dbReference type="PDB" id="2F7N">
    <property type="method" value="X-ray"/>
    <property type="resolution" value="2.00 A"/>
    <property type="chains" value="A=1-207"/>
</dbReference>
<dbReference type="PDBsum" id="2C2F"/>
<dbReference type="PDBsum" id="2C2U"/>
<dbReference type="PDBsum" id="2F7N"/>
<dbReference type="SASBDB" id="Q9RS64"/>
<dbReference type="SMR" id="Q9RS64"/>
<dbReference type="FunCoup" id="Q9RS64">
    <property type="interactions" value="133"/>
</dbReference>
<dbReference type="STRING" id="243230.DR_2263"/>
<dbReference type="PaxDb" id="243230-DR_2263"/>
<dbReference type="EnsemblBacteria" id="AAF11811">
    <property type="protein sequence ID" value="AAF11811"/>
    <property type="gene ID" value="DR_2263"/>
</dbReference>
<dbReference type="GeneID" id="69518515"/>
<dbReference type="KEGG" id="dra:DR_2263"/>
<dbReference type="PATRIC" id="fig|243230.17.peg.2491"/>
<dbReference type="eggNOG" id="COG0783">
    <property type="taxonomic scope" value="Bacteria"/>
</dbReference>
<dbReference type="HOGENOM" id="CLU_098183_0_1_0"/>
<dbReference type="InParanoid" id="Q9RS64"/>
<dbReference type="OrthoDB" id="9797023at2"/>
<dbReference type="EvolutionaryTrace" id="Q9RS64"/>
<dbReference type="Proteomes" id="UP000002524">
    <property type="component" value="Chromosome 1"/>
</dbReference>
<dbReference type="GO" id="GO:0005737">
    <property type="term" value="C:cytoplasm"/>
    <property type="evidence" value="ECO:0007669"/>
    <property type="project" value="UniProtKB-KW"/>
</dbReference>
<dbReference type="GO" id="GO:0009295">
    <property type="term" value="C:nucleoid"/>
    <property type="evidence" value="ECO:0007669"/>
    <property type="project" value="UniProtKB-SubCell"/>
</dbReference>
<dbReference type="GO" id="GO:0003677">
    <property type="term" value="F:DNA binding"/>
    <property type="evidence" value="ECO:0007669"/>
    <property type="project" value="UniProtKB-KW"/>
</dbReference>
<dbReference type="GO" id="GO:0008199">
    <property type="term" value="F:ferric iron binding"/>
    <property type="evidence" value="ECO:0007669"/>
    <property type="project" value="InterPro"/>
</dbReference>
<dbReference type="GO" id="GO:0016722">
    <property type="term" value="F:oxidoreductase activity, acting on metal ions"/>
    <property type="evidence" value="ECO:0007669"/>
    <property type="project" value="InterPro"/>
</dbReference>
<dbReference type="GO" id="GO:0006879">
    <property type="term" value="P:intracellular iron ion homeostasis"/>
    <property type="evidence" value="ECO:0007669"/>
    <property type="project" value="UniProtKB-KW"/>
</dbReference>
<dbReference type="CDD" id="cd01043">
    <property type="entry name" value="DPS"/>
    <property type="match status" value="1"/>
</dbReference>
<dbReference type="Gene3D" id="1.20.1260.10">
    <property type="match status" value="1"/>
</dbReference>
<dbReference type="InterPro" id="IPR002177">
    <property type="entry name" value="DPS_DNA-bd"/>
</dbReference>
<dbReference type="InterPro" id="IPR023188">
    <property type="entry name" value="DPS_DNA-bd_CS"/>
</dbReference>
<dbReference type="InterPro" id="IPR012347">
    <property type="entry name" value="Ferritin-like"/>
</dbReference>
<dbReference type="InterPro" id="IPR009078">
    <property type="entry name" value="Ferritin-like_SF"/>
</dbReference>
<dbReference type="InterPro" id="IPR008331">
    <property type="entry name" value="Ferritin_DPS_dom"/>
</dbReference>
<dbReference type="PANTHER" id="PTHR42932:SF2">
    <property type="entry name" value="DNA PROTECTION DURING STARVATION PROTEIN 1"/>
    <property type="match status" value="1"/>
</dbReference>
<dbReference type="PANTHER" id="PTHR42932">
    <property type="entry name" value="GENERAL STRESS PROTEIN 20U"/>
    <property type="match status" value="1"/>
</dbReference>
<dbReference type="Pfam" id="PF00210">
    <property type="entry name" value="Ferritin"/>
    <property type="match status" value="1"/>
</dbReference>
<dbReference type="PRINTS" id="PR01346">
    <property type="entry name" value="HELNAPAPROT"/>
</dbReference>
<dbReference type="SUPFAM" id="SSF47240">
    <property type="entry name" value="Ferritin-like"/>
    <property type="match status" value="1"/>
</dbReference>
<dbReference type="PROSITE" id="PS00818">
    <property type="entry name" value="DPS_1"/>
    <property type="match status" value="1"/>
</dbReference>
<name>DPS1_DEIRA</name>
<feature type="chain" id="PRO_0000253326" description="DNA protection during starvation protein 1">
    <location>
        <begin position="1"/>
        <end position="207"/>
    </location>
</feature>
<feature type="region of interest" description="Disordered" evidence="2">
    <location>
        <begin position="1"/>
        <end position="31"/>
    </location>
</feature>
<feature type="compositionally biased region" description="Basic and acidic residues" evidence="2">
    <location>
        <begin position="1"/>
        <end position="12"/>
    </location>
</feature>
<feature type="binding site" evidence="1">
    <location>
        <position position="83"/>
    </location>
    <ligand>
        <name>Fe cation</name>
        <dbReference type="ChEBI" id="CHEBI:24875"/>
        <label>1</label>
        <note>ligand shared between two dodecameric partners</note>
    </ligand>
</feature>
<feature type="binding site" description="in other chain" evidence="1">
    <location>
        <position position="110"/>
    </location>
    <ligand>
        <name>Fe cation</name>
        <dbReference type="ChEBI" id="CHEBI:24875"/>
        <label>1</label>
        <note>ligand shared between two dodecameric partners</note>
    </ligand>
</feature>
<feature type="binding site" description="in other chain" evidence="1">
    <location>
        <position position="114"/>
    </location>
    <ligand>
        <name>Fe cation</name>
        <dbReference type="ChEBI" id="CHEBI:24875"/>
        <label>1</label>
        <note>ligand shared between two dodecameric partners</note>
    </ligand>
</feature>
<feature type="binding site" evidence="1">
    <location>
        <position position="114"/>
    </location>
    <ligand>
        <name>Fe cation</name>
        <dbReference type="ChEBI" id="CHEBI:24875"/>
        <label>2</label>
    </ligand>
</feature>
<feature type="helix" evidence="5">
    <location>
        <begin position="33"/>
        <end position="35"/>
    </location>
</feature>
<feature type="helix" evidence="5">
    <location>
        <begin position="55"/>
        <end position="85"/>
    </location>
</feature>
<feature type="helix" evidence="5">
    <location>
        <begin position="91"/>
        <end position="105"/>
    </location>
</feature>
<feature type="helix" evidence="5">
    <location>
        <begin position="108"/>
        <end position="118"/>
    </location>
</feature>
<feature type="helix" evidence="5">
    <location>
        <begin position="127"/>
        <end position="133"/>
    </location>
</feature>
<feature type="helix" evidence="5">
    <location>
        <begin position="146"/>
        <end position="173"/>
    </location>
</feature>
<feature type="helix" evidence="5">
    <location>
        <begin position="177"/>
        <end position="201"/>
    </location>
</feature>
<protein>
    <recommendedName>
        <fullName>DNA protection during starvation protein 1</fullName>
        <ecNumber>1.16.-.-</ecNumber>
    </recommendedName>
</protein>
<sequence length="207" mass="23020">MTKKSTKSEAASKTKKSGVPETGAQGVRAGGADHADAAHLGTVNNALVNHHYLEEKEFQTVAETLQRNLATTISLYLKFKKYHWDIRGRFFRDLHLAYDEFIAEIFPSIDEQAERLVALGGSPLAAPADLARYSTVQVPQETVRDARTQVADLVQDLSRVGKGYRDDSQACDEANDPVTADMYNGYAATIDKIRWMLQAIMDDERLD</sequence>
<reference key="1">
    <citation type="journal article" date="1999" name="Science">
        <title>Genome sequence of the radioresistant bacterium Deinococcus radiodurans R1.</title>
        <authorList>
            <person name="White O."/>
            <person name="Eisen J.A."/>
            <person name="Heidelberg J.F."/>
            <person name="Hickey E.K."/>
            <person name="Peterson J.D."/>
            <person name="Dodson R.J."/>
            <person name="Haft D.H."/>
            <person name="Gwinn M.L."/>
            <person name="Nelson W.C."/>
            <person name="Richardson D.L."/>
            <person name="Moffat K.S."/>
            <person name="Qin H."/>
            <person name="Jiang L."/>
            <person name="Pamphile W."/>
            <person name="Crosby M."/>
            <person name="Shen M."/>
            <person name="Vamathevan J.J."/>
            <person name="Lam P."/>
            <person name="McDonald L.A."/>
            <person name="Utterback T.R."/>
            <person name="Zalewski C."/>
            <person name="Makarova K.S."/>
            <person name="Aravind L."/>
            <person name="Daly M.J."/>
            <person name="Minton K.W."/>
            <person name="Fleischmann R.D."/>
            <person name="Ketchum K.A."/>
            <person name="Nelson K.E."/>
            <person name="Salzberg S.L."/>
            <person name="Smith H.O."/>
            <person name="Venter J.C."/>
            <person name="Fraser C.M."/>
        </authorList>
    </citation>
    <scope>NUCLEOTIDE SEQUENCE [LARGE SCALE GENOMIC DNA]</scope>
    <source>
        <strain>ATCC 13939 / DSM 20539 / JCM 16871 / CCUG 27074 / LMG 4051 / NBRC 15346 / NCIMB 9279 / VKM B-1422 / R1</strain>
    </source>
</reference>
<reference key="2">
    <citation type="journal article" date="2005" name="J. Mol. Biol.">
        <title>Differential DNA binding and protection by dimeric and dodecameric forms of the ferritin homolog Dps from Deinococcus radiodurans.</title>
        <authorList>
            <person name="Grove A."/>
            <person name="Wilkinson S.P."/>
        </authorList>
    </citation>
    <scope>DNA-BINDING</scope>
    <scope>FUNCTION IN DNA PROTECTION</scope>
    <scope>SUBUNIT</scope>
    <source>
        <strain>ATCC 13939 / DSM 20539 / JCM 16871 / CCUG 27074 / LMG 4051 / NBRC 15346 / NCIMB 9279 / VKM B-1422 / R1</strain>
    </source>
</reference>
<proteinExistence type="evidence at protein level"/>
<evidence type="ECO:0000250" key="1"/>
<evidence type="ECO:0000256" key="2">
    <source>
        <dbReference type="SAM" id="MobiDB-lite"/>
    </source>
</evidence>
<evidence type="ECO:0000269" key="3">
    <source>
    </source>
</evidence>
<evidence type="ECO:0000305" key="4"/>
<evidence type="ECO:0007829" key="5">
    <source>
        <dbReference type="PDB" id="2C2U"/>
    </source>
</evidence>